<gene>
    <name evidence="1" type="primary">rpsB</name>
    <name type="ordered locus">BWG_0161</name>
</gene>
<comment type="similarity">
    <text evidence="1">Belongs to the universal ribosomal protein uS2 family.</text>
</comment>
<reference key="1">
    <citation type="journal article" date="2009" name="J. Bacteriol.">
        <title>Genomic sequencing reveals regulatory mutations and recombinational events in the widely used MC4100 lineage of Escherichia coli K-12.</title>
        <authorList>
            <person name="Ferenci T."/>
            <person name="Zhou Z."/>
            <person name="Betteridge T."/>
            <person name="Ren Y."/>
            <person name="Liu Y."/>
            <person name="Feng L."/>
            <person name="Reeves P.R."/>
            <person name="Wang L."/>
        </authorList>
    </citation>
    <scope>NUCLEOTIDE SEQUENCE [LARGE SCALE GENOMIC DNA]</scope>
    <source>
        <strain>K12 / MC4100 / BW2952</strain>
    </source>
</reference>
<proteinExistence type="inferred from homology"/>
<dbReference type="EMBL" id="CP001396">
    <property type="protein sequence ID" value="ACR61792.1"/>
    <property type="molecule type" value="Genomic_DNA"/>
</dbReference>
<dbReference type="RefSeq" id="WP_000246882.1">
    <property type="nucleotide sequence ID" value="NC_012759.1"/>
</dbReference>
<dbReference type="SMR" id="C4ZRR1"/>
<dbReference type="GeneID" id="89519558"/>
<dbReference type="KEGG" id="ebw:BWG_0161"/>
<dbReference type="HOGENOM" id="CLU_040318_1_2_6"/>
<dbReference type="GO" id="GO:0022627">
    <property type="term" value="C:cytosolic small ribosomal subunit"/>
    <property type="evidence" value="ECO:0007669"/>
    <property type="project" value="TreeGrafter"/>
</dbReference>
<dbReference type="GO" id="GO:0003735">
    <property type="term" value="F:structural constituent of ribosome"/>
    <property type="evidence" value="ECO:0007669"/>
    <property type="project" value="InterPro"/>
</dbReference>
<dbReference type="GO" id="GO:0006412">
    <property type="term" value="P:translation"/>
    <property type="evidence" value="ECO:0007669"/>
    <property type="project" value="UniProtKB-UniRule"/>
</dbReference>
<dbReference type="CDD" id="cd01425">
    <property type="entry name" value="RPS2"/>
    <property type="match status" value="1"/>
</dbReference>
<dbReference type="FunFam" id="1.10.287.610:FF:000001">
    <property type="entry name" value="30S ribosomal protein S2"/>
    <property type="match status" value="1"/>
</dbReference>
<dbReference type="Gene3D" id="3.40.50.10490">
    <property type="entry name" value="Glucose-6-phosphate isomerase like protein, domain 1"/>
    <property type="match status" value="1"/>
</dbReference>
<dbReference type="Gene3D" id="1.10.287.610">
    <property type="entry name" value="Helix hairpin bin"/>
    <property type="match status" value="1"/>
</dbReference>
<dbReference type="HAMAP" id="MF_00291_B">
    <property type="entry name" value="Ribosomal_uS2_B"/>
    <property type="match status" value="1"/>
</dbReference>
<dbReference type="InterPro" id="IPR001865">
    <property type="entry name" value="Ribosomal_uS2"/>
</dbReference>
<dbReference type="InterPro" id="IPR005706">
    <property type="entry name" value="Ribosomal_uS2_bac/mit/plastid"/>
</dbReference>
<dbReference type="InterPro" id="IPR018130">
    <property type="entry name" value="Ribosomal_uS2_CS"/>
</dbReference>
<dbReference type="InterPro" id="IPR023591">
    <property type="entry name" value="Ribosomal_uS2_flav_dom_sf"/>
</dbReference>
<dbReference type="NCBIfam" id="TIGR01011">
    <property type="entry name" value="rpsB_bact"/>
    <property type="match status" value="1"/>
</dbReference>
<dbReference type="PANTHER" id="PTHR12534">
    <property type="entry name" value="30S RIBOSOMAL PROTEIN S2 PROKARYOTIC AND ORGANELLAR"/>
    <property type="match status" value="1"/>
</dbReference>
<dbReference type="PANTHER" id="PTHR12534:SF0">
    <property type="entry name" value="SMALL RIBOSOMAL SUBUNIT PROTEIN US2M"/>
    <property type="match status" value="1"/>
</dbReference>
<dbReference type="Pfam" id="PF00318">
    <property type="entry name" value="Ribosomal_S2"/>
    <property type="match status" value="1"/>
</dbReference>
<dbReference type="PRINTS" id="PR00395">
    <property type="entry name" value="RIBOSOMALS2"/>
</dbReference>
<dbReference type="SUPFAM" id="SSF52313">
    <property type="entry name" value="Ribosomal protein S2"/>
    <property type="match status" value="1"/>
</dbReference>
<dbReference type="PROSITE" id="PS00962">
    <property type="entry name" value="RIBOSOMAL_S2_1"/>
    <property type="match status" value="1"/>
</dbReference>
<dbReference type="PROSITE" id="PS00963">
    <property type="entry name" value="RIBOSOMAL_S2_2"/>
    <property type="match status" value="1"/>
</dbReference>
<evidence type="ECO:0000255" key="1">
    <source>
        <dbReference type="HAMAP-Rule" id="MF_00291"/>
    </source>
</evidence>
<evidence type="ECO:0000305" key="2"/>
<name>RS2_ECOBW</name>
<feature type="chain" id="PRO_1000204882" description="Small ribosomal subunit protein uS2">
    <location>
        <begin position="1"/>
        <end position="241"/>
    </location>
</feature>
<keyword id="KW-0687">Ribonucleoprotein</keyword>
<keyword id="KW-0689">Ribosomal protein</keyword>
<sequence>MATVSMRDMLKAGVHFGHQTRYWNPKMKPFIFGARNKVHIINLEKTVPMFNEALAELNKIASRKGKILFVGTKRAASEAVKDAALSCDQFFVNHRWLGGMLTNWKTVRQSIKRLKDLETQSQDGTFDKLTKKEALMRTRELEKLENSLGGIKDMGGLPDALFVIDADHEHIAIKEANNLGIPVFAIVDTNSDPDGVDFVIPGNDDAIRAVTLYLGAVAATVREGRSQDLASQAEESFVEAE</sequence>
<organism>
    <name type="scientific">Escherichia coli (strain K12 / MC4100 / BW2952)</name>
    <dbReference type="NCBI Taxonomy" id="595496"/>
    <lineage>
        <taxon>Bacteria</taxon>
        <taxon>Pseudomonadati</taxon>
        <taxon>Pseudomonadota</taxon>
        <taxon>Gammaproteobacteria</taxon>
        <taxon>Enterobacterales</taxon>
        <taxon>Enterobacteriaceae</taxon>
        <taxon>Escherichia</taxon>
    </lineage>
</organism>
<accession>C4ZRR1</accession>
<protein>
    <recommendedName>
        <fullName evidence="1">Small ribosomal subunit protein uS2</fullName>
    </recommendedName>
    <alternativeName>
        <fullName evidence="2">30S ribosomal protein S2</fullName>
    </alternativeName>
</protein>